<gene>
    <name type="ordered locus">DICTH_1001</name>
</gene>
<proteinExistence type="inferred from homology"/>
<organism>
    <name type="scientific">Dictyoglomus thermophilum (strain ATCC 35947 / DSM 3960 / H-6-12)</name>
    <dbReference type="NCBI Taxonomy" id="309799"/>
    <lineage>
        <taxon>Bacteria</taxon>
        <taxon>Pseudomonadati</taxon>
        <taxon>Dictyoglomota</taxon>
        <taxon>Dictyoglomia</taxon>
        <taxon>Dictyoglomales</taxon>
        <taxon>Dictyoglomaceae</taxon>
        <taxon>Dictyoglomus</taxon>
    </lineage>
</organism>
<sequence length="294" mass="33659">MDFQVFIITGLSGAGKSQSLRILEDLGFFCVDNIPPKLVPTLIDLCLATNGKISGLAVVIDIRTENFLEDFKEMVDTINSKNIPFKILFLEADDEVIVKRYNETRRIHPLLREGKTILESIKLEKERLQEIKTFATDIIDTSQFSLKDLKDNILKILSSFNSSVKSNFLITITSFGFKYGLPIDAHLVFDVRFLPNPFYDPKLRPFSGQAEEVKNFVLSKKEARDFIEYVKNLLDFLVPLYQEEGRNILNIAIGCTGGRHRAVVIADEIFSYLSQKYNTHLFHRDVDKDRNIAK</sequence>
<dbReference type="EMBL" id="CP001146">
    <property type="protein sequence ID" value="ACI18972.1"/>
    <property type="molecule type" value="Genomic_DNA"/>
</dbReference>
<dbReference type="RefSeq" id="WP_012547604.1">
    <property type="nucleotide sequence ID" value="NC_011297.1"/>
</dbReference>
<dbReference type="SMR" id="B5YE93"/>
<dbReference type="STRING" id="309799.DICTH_1001"/>
<dbReference type="PaxDb" id="309799-DICTH_1001"/>
<dbReference type="KEGG" id="dth:DICTH_1001"/>
<dbReference type="eggNOG" id="COG1660">
    <property type="taxonomic scope" value="Bacteria"/>
</dbReference>
<dbReference type="HOGENOM" id="CLU_059558_0_0_0"/>
<dbReference type="OrthoDB" id="9784461at2"/>
<dbReference type="Proteomes" id="UP000001733">
    <property type="component" value="Chromosome"/>
</dbReference>
<dbReference type="GO" id="GO:0005524">
    <property type="term" value="F:ATP binding"/>
    <property type="evidence" value="ECO:0007669"/>
    <property type="project" value="UniProtKB-UniRule"/>
</dbReference>
<dbReference type="GO" id="GO:0005525">
    <property type="term" value="F:GTP binding"/>
    <property type="evidence" value="ECO:0007669"/>
    <property type="project" value="UniProtKB-UniRule"/>
</dbReference>
<dbReference type="Gene3D" id="3.40.50.300">
    <property type="entry name" value="P-loop containing nucleotide triphosphate hydrolases"/>
    <property type="match status" value="1"/>
</dbReference>
<dbReference type="HAMAP" id="MF_00636">
    <property type="entry name" value="RapZ_like"/>
    <property type="match status" value="1"/>
</dbReference>
<dbReference type="InterPro" id="IPR027417">
    <property type="entry name" value="P-loop_NTPase"/>
</dbReference>
<dbReference type="InterPro" id="IPR005337">
    <property type="entry name" value="RapZ-like"/>
</dbReference>
<dbReference type="InterPro" id="IPR053930">
    <property type="entry name" value="RapZ-like_N"/>
</dbReference>
<dbReference type="InterPro" id="IPR053931">
    <property type="entry name" value="RapZ_C"/>
</dbReference>
<dbReference type="NCBIfam" id="NF003828">
    <property type="entry name" value="PRK05416.1"/>
    <property type="match status" value="1"/>
</dbReference>
<dbReference type="PANTHER" id="PTHR30448">
    <property type="entry name" value="RNASE ADAPTER PROTEIN RAPZ"/>
    <property type="match status" value="1"/>
</dbReference>
<dbReference type="PANTHER" id="PTHR30448:SF0">
    <property type="entry name" value="RNASE ADAPTER PROTEIN RAPZ"/>
    <property type="match status" value="1"/>
</dbReference>
<dbReference type="Pfam" id="PF22740">
    <property type="entry name" value="PapZ_C"/>
    <property type="match status" value="1"/>
</dbReference>
<dbReference type="Pfam" id="PF03668">
    <property type="entry name" value="RapZ-like_N"/>
    <property type="match status" value="1"/>
</dbReference>
<dbReference type="PIRSF" id="PIRSF005052">
    <property type="entry name" value="P-loopkin"/>
    <property type="match status" value="1"/>
</dbReference>
<dbReference type="SUPFAM" id="SSF52540">
    <property type="entry name" value="P-loop containing nucleoside triphosphate hydrolases"/>
    <property type="match status" value="1"/>
</dbReference>
<accession>B5YE93</accession>
<evidence type="ECO:0000255" key="1">
    <source>
        <dbReference type="HAMAP-Rule" id="MF_00636"/>
    </source>
</evidence>
<comment type="function">
    <text evidence="1">Displays ATPase and GTPase activities.</text>
</comment>
<comment type="similarity">
    <text evidence="1">Belongs to the RapZ-like family.</text>
</comment>
<keyword id="KW-0067">ATP-binding</keyword>
<keyword id="KW-0342">GTP-binding</keyword>
<keyword id="KW-0547">Nucleotide-binding</keyword>
<reference key="1">
    <citation type="journal article" date="2014" name="Genome Announc.">
        <title>Complete Genome Sequence of the Extreme Thermophile Dictyoglomus thermophilum H-6-12.</title>
        <authorList>
            <person name="Coil D.A."/>
            <person name="Badger J.H."/>
            <person name="Forberger H.C."/>
            <person name="Riggs F."/>
            <person name="Madupu R."/>
            <person name="Fedorova N."/>
            <person name="Ward N."/>
            <person name="Robb F.T."/>
            <person name="Eisen J.A."/>
        </authorList>
    </citation>
    <scope>NUCLEOTIDE SEQUENCE [LARGE SCALE GENOMIC DNA]</scope>
    <source>
        <strain>ATCC 35947 / DSM 3960 / H-6-12</strain>
    </source>
</reference>
<protein>
    <recommendedName>
        <fullName evidence="1">Nucleotide-binding protein DICTH_1001</fullName>
    </recommendedName>
</protein>
<feature type="chain" id="PRO_0000383241" description="Nucleotide-binding protein DICTH_1001">
    <location>
        <begin position="1"/>
        <end position="294"/>
    </location>
</feature>
<feature type="binding site" evidence="1">
    <location>
        <begin position="10"/>
        <end position="17"/>
    </location>
    <ligand>
        <name>ATP</name>
        <dbReference type="ChEBI" id="CHEBI:30616"/>
    </ligand>
</feature>
<feature type="binding site" evidence="1">
    <location>
        <begin position="61"/>
        <end position="64"/>
    </location>
    <ligand>
        <name>GTP</name>
        <dbReference type="ChEBI" id="CHEBI:37565"/>
    </ligand>
</feature>
<name>Y1001_DICT6</name>